<reference key="1">
    <citation type="submission" date="2009-01" db="EMBL/GenBank/DDBJ databases">
        <title>Complete sequence of Geobacter sp. FRC-32.</title>
        <authorList>
            <consortium name="US DOE Joint Genome Institute"/>
            <person name="Lucas S."/>
            <person name="Copeland A."/>
            <person name="Lapidus A."/>
            <person name="Glavina del Rio T."/>
            <person name="Dalin E."/>
            <person name="Tice H."/>
            <person name="Bruce D."/>
            <person name="Goodwin L."/>
            <person name="Pitluck S."/>
            <person name="Saunders E."/>
            <person name="Brettin T."/>
            <person name="Detter J.C."/>
            <person name="Han C."/>
            <person name="Larimer F."/>
            <person name="Land M."/>
            <person name="Hauser L."/>
            <person name="Kyrpides N."/>
            <person name="Ovchinnikova G."/>
            <person name="Kostka J."/>
            <person name="Richardson P."/>
        </authorList>
    </citation>
    <scope>NUCLEOTIDE SEQUENCE [LARGE SCALE GENOMIC DNA]</scope>
    <source>
        <strain>DSM 22248 / JCM 15807 / FRC-32</strain>
    </source>
</reference>
<proteinExistence type="inferred from homology"/>
<organism>
    <name type="scientific">Geotalea daltonii (strain DSM 22248 / JCM 15807 / FRC-32)</name>
    <name type="common">Geobacter daltonii</name>
    <dbReference type="NCBI Taxonomy" id="316067"/>
    <lineage>
        <taxon>Bacteria</taxon>
        <taxon>Pseudomonadati</taxon>
        <taxon>Thermodesulfobacteriota</taxon>
        <taxon>Desulfuromonadia</taxon>
        <taxon>Geobacterales</taxon>
        <taxon>Geobacteraceae</taxon>
        <taxon>Geotalea</taxon>
    </lineage>
</organism>
<accession>B9M876</accession>
<gene>
    <name evidence="1" type="primary">miaA1</name>
    <name type="ordered locus">Geob_1985</name>
</gene>
<keyword id="KW-0067">ATP-binding</keyword>
<keyword id="KW-0460">Magnesium</keyword>
<keyword id="KW-0547">Nucleotide-binding</keyword>
<keyword id="KW-1185">Reference proteome</keyword>
<keyword id="KW-0808">Transferase</keyword>
<keyword id="KW-0819">tRNA processing</keyword>
<name>MIAA1_GEODF</name>
<sequence>MLFNLLVILGPTASGKTRLGVELARRFFGEVLSADSRQVYRGMDIGTGKDLSEYGEVPYHLIDIVDPGYEFNVFEFQRRFEQAYNHITERGKLPVMVGGTGMYLESVLKGYRLVEVPENAQLRRQLAGFSHEALMERLGNANPRLHNSTDLLDHHRLVRAIEIAEYEAPPQAPFLPGLSPLIFGIQWDRPILRQRITERLKLRLDQGMIQEVERLHDTGIPFETLEFYGLEYRFIARHLKGELSRNDMFQKLNSAIHDFAKRQCTWFSRMERHGTVIHWLDGAADPLAEALGILSHQKTQSTPFCRP</sequence>
<comment type="function">
    <text evidence="1">Catalyzes the transfer of a dimethylallyl group onto the adenine at position 37 in tRNAs that read codons beginning with uridine, leading to the formation of N6-(dimethylallyl)adenosine (i(6)A).</text>
</comment>
<comment type="catalytic activity">
    <reaction evidence="1">
        <text>adenosine(37) in tRNA + dimethylallyl diphosphate = N(6)-dimethylallyladenosine(37) in tRNA + diphosphate</text>
        <dbReference type="Rhea" id="RHEA:26482"/>
        <dbReference type="Rhea" id="RHEA-COMP:10162"/>
        <dbReference type="Rhea" id="RHEA-COMP:10375"/>
        <dbReference type="ChEBI" id="CHEBI:33019"/>
        <dbReference type="ChEBI" id="CHEBI:57623"/>
        <dbReference type="ChEBI" id="CHEBI:74411"/>
        <dbReference type="ChEBI" id="CHEBI:74415"/>
        <dbReference type="EC" id="2.5.1.75"/>
    </reaction>
</comment>
<comment type="cofactor">
    <cofactor evidence="1">
        <name>Mg(2+)</name>
        <dbReference type="ChEBI" id="CHEBI:18420"/>
    </cofactor>
</comment>
<comment type="subunit">
    <text evidence="1">Monomer.</text>
</comment>
<comment type="similarity">
    <text evidence="1">Belongs to the IPP transferase family.</text>
</comment>
<evidence type="ECO:0000255" key="1">
    <source>
        <dbReference type="HAMAP-Rule" id="MF_00185"/>
    </source>
</evidence>
<feature type="chain" id="PRO_0000377172" description="tRNA dimethylallyltransferase 1">
    <location>
        <begin position="1"/>
        <end position="307"/>
    </location>
</feature>
<feature type="region of interest" description="Interaction with substrate tRNA" evidence="1">
    <location>
        <begin position="35"/>
        <end position="38"/>
    </location>
</feature>
<feature type="binding site" evidence="1">
    <location>
        <begin position="10"/>
        <end position="17"/>
    </location>
    <ligand>
        <name>ATP</name>
        <dbReference type="ChEBI" id="CHEBI:30616"/>
    </ligand>
</feature>
<feature type="binding site" evidence="1">
    <location>
        <begin position="12"/>
        <end position="17"/>
    </location>
    <ligand>
        <name>substrate</name>
    </ligand>
</feature>
<feature type="site" description="Interaction with substrate tRNA" evidence="1">
    <location>
        <position position="100"/>
    </location>
</feature>
<protein>
    <recommendedName>
        <fullName evidence="1">tRNA dimethylallyltransferase 1</fullName>
        <ecNumber evidence="1">2.5.1.75</ecNumber>
    </recommendedName>
    <alternativeName>
        <fullName evidence="1">Dimethylallyl diphosphate:tRNA dimethylallyltransferase 1</fullName>
        <shortName evidence="1">DMAPP:tRNA dimethylallyltransferase 1</shortName>
        <shortName evidence="1">DMATase 1</shortName>
    </alternativeName>
    <alternativeName>
        <fullName evidence="1">Isopentenyl-diphosphate:tRNA isopentenyltransferase 1</fullName>
        <shortName evidence="1">IPP transferase 1</shortName>
        <shortName evidence="1">IPPT 1</shortName>
        <shortName evidence="1">IPTase 1</shortName>
    </alternativeName>
</protein>
<dbReference type="EC" id="2.5.1.75" evidence="1"/>
<dbReference type="EMBL" id="CP001390">
    <property type="protein sequence ID" value="ACM20342.1"/>
    <property type="molecule type" value="Genomic_DNA"/>
</dbReference>
<dbReference type="RefSeq" id="WP_012647071.1">
    <property type="nucleotide sequence ID" value="NC_011979.1"/>
</dbReference>
<dbReference type="SMR" id="B9M876"/>
<dbReference type="STRING" id="316067.Geob_1985"/>
<dbReference type="KEGG" id="geo:Geob_1985"/>
<dbReference type="eggNOG" id="COG0324">
    <property type="taxonomic scope" value="Bacteria"/>
</dbReference>
<dbReference type="HOGENOM" id="CLU_032616_0_1_7"/>
<dbReference type="OrthoDB" id="9776390at2"/>
<dbReference type="Proteomes" id="UP000007721">
    <property type="component" value="Chromosome"/>
</dbReference>
<dbReference type="GO" id="GO:0005524">
    <property type="term" value="F:ATP binding"/>
    <property type="evidence" value="ECO:0007669"/>
    <property type="project" value="UniProtKB-UniRule"/>
</dbReference>
<dbReference type="GO" id="GO:0052381">
    <property type="term" value="F:tRNA dimethylallyltransferase activity"/>
    <property type="evidence" value="ECO:0007669"/>
    <property type="project" value="UniProtKB-UniRule"/>
</dbReference>
<dbReference type="GO" id="GO:0006400">
    <property type="term" value="P:tRNA modification"/>
    <property type="evidence" value="ECO:0007669"/>
    <property type="project" value="TreeGrafter"/>
</dbReference>
<dbReference type="Gene3D" id="3.40.50.300">
    <property type="entry name" value="P-loop containing nucleotide triphosphate hydrolases"/>
    <property type="match status" value="1"/>
</dbReference>
<dbReference type="HAMAP" id="MF_00185">
    <property type="entry name" value="IPP_trans"/>
    <property type="match status" value="1"/>
</dbReference>
<dbReference type="InterPro" id="IPR039657">
    <property type="entry name" value="Dimethylallyltransferase"/>
</dbReference>
<dbReference type="InterPro" id="IPR018022">
    <property type="entry name" value="IPT"/>
</dbReference>
<dbReference type="InterPro" id="IPR027417">
    <property type="entry name" value="P-loop_NTPase"/>
</dbReference>
<dbReference type="NCBIfam" id="TIGR00174">
    <property type="entry name" value="miaA"/>
    <property type="match status" value="1"/>
</dbReference>
<dbReference type="PANTHER" id="PTHR11088">
    <property type="entry name" value="TRNA DIMETHYLALLYLTRANSFERASE"/>
    <property type="match status" value="1"/>
</dbReference>
<dbReference type="PANTHER" id="PTHR11088:SF60">
    <property type="entry name" value="TRNA DIMETHYLALLYLTRANSFERASE"/>
    <property type="match status" value="1"/>
</dbReference>
<dbReference type="Pfam" id="PF01715">
    <property type="entry name" value="IPPT"/>
    <property type="match status" value="1"/>
</dbReference>
<dbReference type="SUPFAM" id="SSF52540">
    <property type="entry name" value="P-loop containing nucleoside triphosphate hydrolases"/>
    <property type="match status" value="2"/>
</dbReference>